<protein>
    <recommendedName>
        <fullName>Lysyl endopeptidase</fullName>
        <ecNumber>3.4.21.50</ecNumber>
    </recommendedName>
    <alternativeName>
        <fullName>Lys-C</fullName>
    </alternativeName>
</protein>
<dbReference type="EC" id="3.4.21.50"/>
<dbReference type="PIR" id="S77957">
    <property type="entry name" value="S77957"/>
</dbReference>
<dbReference type="PDB" id="4NSV">
    <property type="method" value="X-ray"/>
    <property type="resolution" value="0.90 A"/>
    <property type="chains" value="A/B=1-266"/>
</dbReference>
<dbReference type="PDB" id="4NSY">
    <property type="method" value="X-ray"/>
    <property type="resolution" value="1.10 A"/>
    <property type="chains" value="A/B=1-266"/>
</dbReference>
<dbReference type="PDBsum" id="4NSV"/>
<dbReference type="PDBsum" id="4NSY"/>
<dbReference type="SMR" id="Q7M135"/>
<dbReference type="STRING" id="69.GLE_3841"/>
<dbReference type="MEROPS" id="S01.280"/>
<dbReference type="BRENDA" id="3.4.21.50">
    <property type="organism ID" value="3118"/>
</dbReference>
<dbReference type="EvolutionaryTrace" id="Q7M135"/>
<dbReference type="GO" id="GO:0005576">
    <property type="term" value="C:extracellular region"/>
    <property type="evidence" value="ECO:0007669"/>
    <property type="project" value="UniProtKB-SubCell"/>
</dbReference>
<dbReference type="GO" id="GO:0008236">
    <property type="term" value="F:serine-type peptidase activity"/>
    <property type="evidence" value="ECO:0007669"/>
    <property type="project" value="UniProtKB-KW"/>
</dbReference>
<dbReference type="GO" id="GO:0006508">
    <property type="term" value="P:proteolysis"/>
    <property type="evidence" value="ECO:0007669"/>
    <property type="project" value="UniProtKB-KW"/>
</dbReference>
<dbReference type="Gene3D" id="2.40.10.10">
    <property type="entry name" value="Trypsin-like serine proteases"/>
    <property type="match status" value="2"/>
</dbReference>
<dbReference type="InterPro" id="IPR009003">
    <property type="entry name" value="Peptidase_S1_PA"/>
</dbReference>
<dbReference type="InterPro" id="IPR043504">
    <property type="entry name" value="Peptidase_S1_PA_chymotrypsin"/>
</dbReference>
<dbReference type="PANTHER" id="PTHR36234">
    <property type="entry name" value="LYSYL ENDOPEPTIDASE"/>
    <property type="match status" value="1"/>
</dbReference>
<dbReference type="PANTHER" id="PTHR36234:SF5">
    <property type="entry name" value="LYSYL ENDOPEPTIDASE"/>
    <property type="match status" value="1"/>
</dbReference>
<dbReference type="Pfam" id="PF13365">
    <property type="entry name" value="Trypsin_2"/>
    <property type="match status" value="1"/>
</dbReference>
<dbReference type="SUPFAM" id="SSF50494">
    <property type="entry name" value="Trypsin-like serine proteases"/>
    <property type="match status" value="1"/>
</dbReference>
<reference key="1">
    <citation type="submission" date="1997-06" db="PIR data bank">
        <authorList>
            <person name="Mentele R."/>
            <person name="Eckerskorn C."/>
            <person name="Kellermann J."/>
            <person name="Strupat K."/>
            <person name="Hagmann J."/>
            <person name="Lottspeich F."/>
        </authorList>
    </citation>
    <scope>PROTEIN SEQUENCE</scope>
</reference>
<proteinExistence type="evidence at protein level"/>
<evidence type="ECO:0000250" key="1"/>
<evidence type="ECO:0000305" key="2"/>
<evidence type="ECO:0007829" key="3">
    <source>
        <dbReference type="PDB" id="4NSV"/>
    </source>
</evidence>
<organism>
    <name type="scientific">Lysobacter enzymogenes</name>
    <dbReference type="NCBI Taxonomy" id="69"/>
    <lineage>
        <taxon>Bacteria</taxon>
        <taxon>Pseudomonadati</taxon>
        <taxon>Pseudomonadota</taxon>
        <taxon>Gammaproteobacteria</taxon>
        <taxon>Lysobacterales</taxon>
        <taxon>Lysobacteraceae</taxon>
        <taxon>Lysobacter</taxon>
    </lineage>
</organism>
<sequence length="269" mass="27961">GVSGSCNIDVVCPEGNGHRDVIRSVAAYSKQGTMWCTGSLVNNSANDKKMYFLTANHCGMTTAAIASSMVVYWNYQNSTCRAPGSSSSGANGDGSLAQSQTGAVVRATNAASDFTLLELNTAANPAYNLFWAGWDRRDQNFAGATAIHHPNVAEKRISHSTVATEISGYNGATGTSHLHVFWQASGGVTEPGSSGSPIYSPEKRVLGQLHGGPSSCSATGADRSDYYGRVFTSWTGGGTSATRLSDWLDAAGTGAQFIDGLDSTGTPPV</sequence>
<accession>Q7M135</accession>
<feature type="chain" id="PRO_0000093854" description="Lysyl endopeptidase">
    <location>
        <begin position="1"/>
        <end position="269"/>
    </location>
</feature>
<feature type="active site" description="Charge relay system" evidence="1">
    <location>
        <position position="57"/>
    </location>
</feature>
<feature type="active site" description="Charge relay system" evidence="1">
    <location>
        <position position="113"/>
    </location>
</feature>
<feature type="active site" description="Charge relay system" evidence="1">
    <location>
        <position position="194"/>
    </location>
</feature>
<feature type="disulfide bond" evidence="1">
    <location>
        <begin position="6"/>
        <end position="216"/>
    </location>
</feature>
<feature type="disulfide bond" evidence="1">
    <location>
        <begin position="12"/>
        <end position="80"/>
    </location>
</feature>
<feature type="disulfide bond" evidence="1">
    <location>
        <begin position="36"/>
        <end position="58"/>
    </location>
</feature>
<feature type="strand" evidence="3">
    <location>
        <begin position="7"/>
        <end position="9"/>
    </location>
</feature>
<feature type="helix" evidence="3">
    <location>
        <begin position="13"/>
        <end position="15"/>
    </location>
</feature>
<feature type="helix" evidence="3">
    <location>
        <begin position="21"/>
        <end position="24"/>
    </location>
</feature>
<feature type="strand" evidence="3">
    <location>
        <begin position="25"/>
        <end position="30"/>
    </location>
</feature>
<feature type="strand" evidence="3">
    <location>
        <begin position="33"/>
        <end position="41"/>
    </location>
</feature>
<feature type="strand" evidence="3">
    <location>
        <begin position="51"/>
        <end position="55"/>
    </location>
</feature>
<feature type="helix" evidence="3">
    <location>
        <begin position="56"/>
        <end position="58"/>
    </location>
</feature>
<feature type="helix" evidence="3">
    <location>
        <begin position="63"/>
        <end position="67"/>
    </location>
</feature>
<feature type="strand" evidence="3">
    <location>
        <begin position="70"/>
        <end position="72"/>
    </location>
</feature>
<feature type="turn" evidence="3">
    <location>
        <begin position="86"/>
        <end position="89"/>
    </location>
</feature>
<feature type="strand" evidence="3">
    <location>
        <begin position="98"/>
        <end position="101"/>
    </location>
</feature>
<feature type="strand" evidence="3">
    <location>
        <begin position="103"/>
        <end position="109"/>
    </location>
</feature>
<feature type="turn" evidence="3">
    <location>
        <begin position="110"/>
        <end position="113"/>
    </location>
</feature>
<feature type="strand" evidence="3">
    <location>
        <begin position="114"/>
        <end position="121"/>
    </location>
</feature>
<feature type="helix" evidence="3">
    <location>
        <begin position="125"/>
        <end position="127"/>
    </location>
</feature>
<feature type="strand" evidence="3">
    <location>
        <begin position="130"/>
        <end position="135"/>
    </location>
</feature>
<feature type="strand" evidence="3">
    <location>
        <begin position="144"/>
        <end position="148"/>
    </location>
</feature>
<feature type="helix" evidence="3">
    <location>
        <begin position="150"/>
        <end position="152"/>
    </location>
</feature>
<feature type="strand" evidence="3">
    <location>
        <begin position="156"/>
        <end position="160"/>
    </location>
</feature>
<feature type="strand" evidence="3">
    <location>
        <begin position="165"/>
        <end position="168"/>
    </location>
</feature>
<feature type="helix" evidence="3">
    <location>
        <begin position="169"/>
        <end position="171"/>
    </location>
</feature>
<feature type="strand" evidence="3">
    <location>
        <begin position="173"/>
        <end position="181"/>
    </location>
</feature>
<feature type="strand" evidence="3">
    <location>
        <begin position="197"/>
        <end position="199"/>
    </location>
</feature>
<feature type="strand" evidence="3">
    <location>
        <begin position="203"/>
        <end position="211"/>
    </location>
</feature>
<feature type="helix" evidence="3">
    <location>
        <begin position="220"/>
        <end position="222"/>
    </location>
</feature>
<feature type="strand" evidence="3">
    <location>
        <begin position="223"/>
        <end position="229"/>
    </location>
</feature>
<feature type="helix" evidence="3">
    <location>
        <begin position="230"/>
        <end position="235"/>
    </location>
</feature>
<feature type="helix" evidence="3">
    <location>
        <begin position="240"/>
        <end position="242"/>
    </location>
</feature>
<feature type="helix" evidence="3">
    <location>
        <begin position="245"/>
        <end position="248"/>
    </location>
</feature>
<feature type="turn" evidence="3">
    <location>
        <begin position="249"/>
        <end position="251"/>
    </location>
</feature>
<feature type="strand" evidence="3">
    <location>
        <begin position="256"/>
        <end position="258"/>
    </location>
</feature>
<keyword id="KW-0002">3D-structure</keyword>
<keyword id="KW-0903">Direct protein sequencing</keyword>
<keyword id="KW-1015">Disulfide bond</keyword>
<keyword id="KW-0378">Hydrolase</keyword>
<keyword id="KW-0645">Protease</keyword>
<keyword id="KW-0964">Secreted</keyword>
<keyword id="KW-0720">Serine protease</keyword>
<comment type="function">
    <text>Highly specific endopeptidase that hydrolyzes lysyl bonds including the Lys-Pro bond.</text>
</comment>
<comment type="catalytic activity">
    <reaction>
        <text>Preferential cleavage: Lys-|-Xaa, including Lys-|-Pro.</text>
        <dbReference type="EC" id="3.4.21.50"/>
    </reaction>
</comment>
<comment type="subcellular location">
    <subcellularLocation>
        <location>Secreted</location>
    </subcellularLocation>
</comment>
<comment type="biotechnology">
    <text>Sold under the name 'Endoproteinase Lys-C' by Roche.</text>
</comment>
<comment type="similarity">
    <text evidence="2">Belongs to the peptidase S1 family.</text>
</comment>
<name>LYSC_LYSEN</name>